<evidence type="ECO:0000255" key="1">
    <source>
        <dbReference type="HAMAP-Rule" id="MF_00051"/>
    </source>
</evidence>
<dbReference type="EC" id="2.1.2.1" evidence="1"/>
<dbReference type="EMBL" id="CP000828">
    <property type="protein sequence ID" value="ABW26955.1"/>
    <property type="molecule type" value="Genomic_DNA"/>
</dbReference>
<dbReference type="RefSeq" id="WP_012162455.1">
    <property type="nucleotide sequence ID" value="NC_009925.1"/>
</dbReference>
<dbReference type="SMR" id="B0CEI9"/>
<dbReference type="STRING" id="329726.AM1_1938"/>
<dbReference type="KEGG" id="amr:AM1_1938"/>
<dbReference type="eggNOG" id="COG0112">
    <property type="taxonomic scope" value="Bacteria"/>
</dbReference>
<dbReference type="HOGENOM" id="CLU_022477_2_1_3"/>
<dbReference type="OrthoDB" id="9803846at2"/>
<dbReference type="UniPathway" id="UPA00193"/>
<dbReference type="UniPathway" id="UPA00288">
    <property type="reaction ID" value="UER01023"/>
</dbReference>
<dbReference type="Proteomes" id="UP000000268">
    <property type="component" value="Chromosome"/>
</dbReference>
<dbReference type="GO" id="GO:0005829">
    <property type="term" value="C:cytosol"/>
    <property type="evidence" value="ECO:0007669"/>
    <property type="project" value="TreeGrafter"/>
</dbReference>
<dbReference type="GO" id="GO:0004372">
    <property type="term" value="F:glycine hydroxymethyltransferase activity"/>
    <property type="evidence" value="ECO:0007669"/>
    <property type="project" value="UniProtKB-UniRule"/>
</dbReference>
<dbReference type="GO" id="GO:0030170">
    <property type="term" value="F:pyridoxal phosphate binding"/>
    <property type="evidence" value="ECO:0007669"/>
    <property type="project" value="UniProtKB-UniRule"/>
</dbReference>
<dbReference type="GO" id="GO:0019264">
    <property type="term" value="P:glycine biosynthetic process from serine"/>
    <property type="evidence" value="ECO:0007669"/>
    <property type="project" value="UniProtKB-UniRule"/>
</dbReference>
<dbReference type="GO" id="GO:0035999">
    <property type="term" value="P:tetrahydrofolate interconversion"/>
    <property type="evidence" value="ECO:0007669"/>
    <property type="project" value="UniProtKB-UniRule"/>
</dbReference>
<dbReference type="CDD" id="cd00378">
    <property type="entry name" value="SHMT"/>
    <property type="match status" value="1"/>
</dbReference>
<dbReference type="FunFam" id="3.40.640.10:FF:000001">
    <property type="entry name" value="Serine hydroxymethyltransferase"/>
    <property type="match status" value="1"/>
</dbReference>
<dbReference type="FunFam" id="3.90.1150.10:FF:000003">
    <property type="entry name" value="Serine hydroxymethyltransferase"/>
    <property type="match status" value="1"/>
</dbReference>
<dbReference type="Gene3D" id="3.90.1150.10">
    <property type="entry name" value="Aspartate Aminotransferase, domain 1"/>
    <property type="match status" value="1"/>
</dbReference>
<dbReference type="Gene3D" id="3.40.640.10">
    <property type="entry name" value="Type I PLP-dependent aspartate aminotransferase-like (Major domain)"/>
    <property type="match status" value="1"/>
</dbReference>
<dbReference type="HAMAP" id="MF_00051">
    <property type="entry name" value="SHMT"/>
    <property type="match status" value="1"/>
</dbReference>
<dbReference type="InterPro" id="IPR015424">
    <property type="entry name" value="PyrdxlP-dep_Trfase"/>
</dbReference>
<dbReference type="InterPro" id="IPR015421">
    <property type="entry name" value="PyrdxlP-dep_Trfase_major"/>
</dbReference>
<dbReference type="InterPro" id="IPR015422">
    <property type="entry name" value="PyrdxlP-dep_Trfase_small"/>
</dbReference>
<dbReference type="InterPro" id="IPR001085">
    <property type="entry name" value="Ser_HO-MeTrfase"/>
</dbReference>
<dbReference type="InterPro" id="IPR049943">
    <property type="entry name" value="Ser_HO-MeTrfase-like"/>
</dbReference>
<dbReference type="InterPro" id="IPR019798">
    <property type="entry name" value="Ser_HO-MeTrfase_PLP_BS"/>
</dbReference>
<dbReference type="InterPro" id="IPR039429">
    <property type="entry name" value="SHMT-like_dom"/>
</dbReference>
<dbReference type="NCBIfam" id="NF000586">
    <property type="entry name" value="PRK00011.1"/>
    <property type="match status" value="1"/>
</dbReference>
<dbReference type="PANTHER" id="PTHR11680">
    <property type="entry name" value="SERINE HYDROXYMETHYLTRANSFERASE"/>
    <property type="match status" value="1"/>
</dbReference>
<dbReference type="PANTHER" id="PTHR11680:SF35">
    <property type="entry name" value="SERINE HYDROXYMETHYLTRANSFERASE 1"/>
    <property type="match status" value="1"/>
</dbReference>
<dbReference type="Pfam" id="PF00464">
    <property type="entry name" value="SHMT"/>
    <property type="match status" value="1"/>
</dbReference>
<dbReference type="PIRSF" id="PIRSF000412">
    <property type="entry name" value="SHMT"/>
    <property type="match status" value="1"/>
</dbReference>
<dbReference type="SUPFAM" id="SSF53383">
    <property type="entry name" value="PLP-dependent transferases"/>
    <property type="match status" value="1"/>
</dbReference>
<dbReference type="PROSITE" id="PS00096">
    <property type="entry name" value="SHMT"/>
    <property type="match status" value="1"/>
</dbReference>
<reference key="1">
    <citation type="journal article" date="2008" name="Proc. Natl. Acad. Sci. U.S.A.">
        <title>Niche adaptation and genome expansion in the chlorophyll d-producing cyanobacterium Acaryochloris marina.</title>
        <authorList>
            <person name="Swingley W.D."/>
            <person name="Chen M."/>
            <person name="Cheung P.C."/>
            <person name="Conrad A.L."/>
            <person name="Dejesa L.C."/>
            <person name="Hao J."/>
            <person name="Honchak B.M."/>
            <person name="Karbach L.E."/>
            <person name="Kurdoglu A."/>
            <person name="Lahiri S."/>
            <person name="Mastrian S.D."/>
            <person name="Miyashita H."/>
            <person name="Page L."/>
            <person name="Ramakrishna P."/>
            <person name="Satoh S."/>
            <person name="Sattley W.M."/>
            <person name="Shimada Y."/>
            <person name="Taylor H.L."/>
            <person name="Tomo T."/>
            <person name="Tsuchiya T."/>
            <person name="Wang Z.T."/>
            <person name="Raymond J."/>
            <person name="Mimuro M."/>
            <person name="Blankenship R.E."/>
            <person name="Touchman J.W."/>
        </authorList>
    </citation>
    <scope>NUCLEOTIDE SEQUENCE [LARGE SCALE GENOMIC DNA]</scope>
    <source>
        <strain>MBIC 11017</strain>
    </source>
</reference>
<name>GLYA_ACAM1</name>
<organism>
    <name type="scientific">Acaryochloris marina (strain MBIC 11017)</name>
    <dbReference type="NCBI Taxonomy" id="329726"/>
    <lineage>
        <taxon>Bacteria</taxon>
        <taxon>Bacillati</taxon>
        <taxon>Cyanobacteriota</taxon>
        <taxon>Cyanophyceae</taxon>
        <taxon>Acaryochloridales</taxon>
        <taxon>Acaryochloridaceae</taxon>
        <taxon>Acaryochloris</taxon>
    </lineage>
</organism>
<accession>B0CEI9</accession>
<feature type="chain" id="PRO_0000369892" description="Serine hydroxymethyltransferase">
    <location>
        <begin position="1"/>
        <end position="426"/>
    </location>
</feature>
<feature type="binding site" evidence="1">
    <location>
        <position position="121"/>
    </location>
    <ligand>
        <name>(6S)-5,6,7,8-tetrahydrofolate</name>
        <dbReference type="ChEBI" id="CHEBI:57453"/>
    </ligand>
</feature>
<feature type="binding site" evidence="1">
    <location>
        <begin position="125"/>
        <end position="127"/>
    </location>
    <ligand>
        <name>(6S)-5,6,7,8-tetrahydrofolate</name>
        <dbReference type="ChEBI" id="CHEBI:57453"/>
    </ligand>
</feature>
<feature type="binding site" evidence="1">
    <location>
        <begin position="354"/>
        <end position="356"/>
    </location>
    <ligand>
        <name>(6S)-5,6,7,8-tetrahydrofolate</name>
        <dbReference type="ChEBI" id="CHEBI:57453"/>
    </ligand>
</feature>
<feature type="site" description="Plays an important role in substrate specificity" evidence="1">
    <location>
        <position position="229"/>
    </location>
</feature>
<feature type="modified residue" description="N6-(pyridoxal phosphate)lysine" evidence="1">
    <location>
        <position position="230"/>
    </location>
</feature>
<proteinExistence type="inferred from homology"/>
<comment type="function">
    <text evidence="1">Catalyzes the reversible interconversion of serine and glycine with tetrahydrofolate (THF) serving as the one-carbon carrier. This reaction serves as the major source of one-carbon groups required for the biosynthesis of purines, thymidylate, methionine, and other important biomolecules. Also exhibits THF-independent aldolase activity toward beta-hydroxyamino acids, producing glycine and aldehydes, via a retro-aldol mechanism.</text>
</comment>
<comment type="catalytic activity">
    <reaction evidence="1">
        <text>(6R)-5,10-methylene-5,6,7,8-tetrahydrofolate + glycine + H2O = (6S)-5,6,7,8-tetrahydrofolate + L-serine</text>
        <dbReference type="Rhea" id="RHEA:15481"/>
        <dbReference type="ChEBI" id="CHEBI:15377"/>
        <dbReference type="ChEBI" id="CHEBI:15636"/>
        <dbReference type="ChEBI" id="CHEBI:33384"/>
        <dbReference type="ChEBI" id="CHEBI:57305"/>
        <dbReference type="ChEBI" id="CHEBI:57453"/>
        <dbReference type="EC" id="2.1.2.1"/>
    </reaction>
</comment>
<comment type="cofactor">
    <cofactor evidence="1">
        <name>pyridoxal 5'-phosphate</name>
        <dbReference type="ChEBI" id="CHEBI:597326"/>
    </cofactor>
</comment>
<comment type="pathway">
    <text evidence="1">One-carbon metabolism; tetrahydrofolate interconversion.</text>
</comment>
<comment type="pathway">
    <text evidence="1">Amino-acid biosynthesis; glycine biosynthesis; glycine from L-serine: step 1/1.</text>
</comment>
<comment type="subunit">
    <text evidence="1">Homodimer.</text>
</comment>
<comment type="subcellular location">
    <subcellularLocation>
        <location evidence="1">Cytoplasm</location>
    </subcellularLocation>
</comment>
<comment type="similarity">
    <text evidence="1">Belongs to the SHMT family.</text>
</comment>
<gene>
    <name evidence="1" type="primary">glyA</name>
    <name type="ordered locus">AM1_1938</name>
</gene>
<protein>
    <recommendedName>
        <fullName evidence="1">Serine hydroxymethyltransferase</fullName>
        <shortName evidence="1">SHMT</shortName>
        <shortName evidence="1">Serine methylase</shortName>
        <ecNumber evidence="1">2.1.2.1</ecNumber>
    </recommendedName>
</protein>
<keyword id="KW-0028">Amino-acid biosynthesis</keyword>
<keyword id="KW-0963">Cytoplasm</keyword>
<keyword id="KW-0554">One-carbon metabolism</keyword>
<keyword id="KW-0663">Pyridoxal phosphate</keyword>
<keyword id="KW-1185">Reference proteome</keyword>
<keyword id="KW-0808">Transferase</keyword>
<sequence length="426" mass="46307">MQTSLDILTETDPAIAGILQQELQRQRDHLELIASENFTSAAVLAAQGSVLTNKYAEGLPGKRYYGGCEYIDAAEQLAIDRAKELFGAAHVNVQPHSGAQANFAVFLTLLQPGDTFMGMDLSHGGHLTHGSPVNVSGKWFNVVQYGVDPNSEQLNYDTIRELALKHRPKMIVCGYSAYPRIIDFEKFRAIADEIDAYLMADIAHIAGLVASGHHPNPLPFCDVVTTTTHKTLRGPRGGLIMTKDLELGKKFDKSVFPGTQGGPLEHVIAAKAVAFGEALKPDFRDYCGHVVENAQTLAQQLQERGFKIVSNGTDNHLLLVDLRSIGMTGKQADQRVSQVNITANKNTVPFDPESPFVTSGLRLGSPAMTTRGMGTAEFTEIANIIADCLLKPEDAAVTEDCRQRVANLCSRFPLYPHLTSPVPALT</sequence>